<gene>
    <name type="ORF">CC1G_06667</name>
</gene>
<accession>A8P7Y3</accession>
<proteinExistence type="inferred from homology"/>
<evidence type="ECO:0000255" key="1">
    <source>
        <dbReference type="HAMAP-Rule" id="MF_03155"/>
    </source>
</evidence>
<comment type="function">
    <text evidence="1">Catalyzes the reversible phosphorylation of S-methyl-5'-thioadenosine (MTA) to adenine and 5-methylthioribose-1-phosphate. Involved in the breakdown of MTA, a major by-product of polyamine biosynthesis. Responsible for the first step in the methionine salvage pathway after MTA has been generated from S-adenosylmethionine. Has broad substrate specificity with 6-aminopurine nucleosides as preferred substrates.</text>
</comment>
<comment type="catalytic activity">
    <reaction evidence="1">
        <text>S-methyl-5'-thioadenosine + phosphate = 5-(methylsulfanyl)-alpha-D-ribose 1-phosphate + adenine</text>
        <dbReference type="Rhea" id="RHEA:11852"/>
        <dbReference type="ChEBI" id="CHEBI:16708"/>
        <dbReference type="ChEBI" id="CHEBI:17509"/>
        <dbReference type="ChEBI" id="CHEBI:43474"/>
        <dbReference type="ChEBI" id="CHEBI:58533"/>
        <dbReference type="EC" id="2.4.2.28"/>
    </reaction>
</comment>
<comment type="pathway">
    <text evidence="1">Amino-acid biosynthesis; L-methionine biosynthesis via salvage pathway; S-methyl-5-thio-alpha-D-ribose 1-phosphate from S-methyl-5'-thioadenosine (phosphorylase route): step 1/1.</text>
</comment>
<comment type="subunit">
    <text evidence="1">Homotrimer.</text>
</comment>
<comment type="subcellular location">
    <subcellularLocation>
        <location evidence="1">Cytoplasm</location>
    </subcellularLocation>
    <subcellularLocation>
        <location evidence="1">Nucleus</location>
    </subcellularLocation>
</comment>
<comment type="similarity">
    <text evidence="1">Belongs to the PNP/MTAP phosphorylase family. MTAP subfamily.</text>
</comment>
<feature type="chain" id="PRO_0000415126" description="S-methyl-5'-thioadenosine phosphorylase">
    <location>
        <begin position="1"/>
        <end position="324"/>
    </location>
</feature>
<feature type="binding site" evidence="1">
    <location>
        <position position="14"/>
    </location>
    <ligand>
        <name>phosphate</name>
        <dbReference type="ChEBI" id="CHEBI:43474"/>
    </ligand>
</feature>
<feature type="binding site" evidence="1">
    <location>
        <begin position="57"/>
        <end position="58"/>
    </location>
    <ligand>
        <name>phosphate</name>
        <dbReference type="ChEBI" id="CHEBI:43474"/>
    </ligand>
</feature>
<feature type="binding site" evidence="1">
    <location>
        <begin position="90"/>
        <end position="91"/>
    </location>
    <ligand>
        <name>phosphate</name>
        <dbReference type="ChEBI" id="CHEBI:43474"/>
    </ligand>
</feature>
<feature type="binding site" evidence="1">
    <location>
        <position position="196"/>
    </location>
    <ligand>
        <name>substrate</name>
    </ligand>
</feature>
<feature type="binding site" evidence="1">
    <location>
        <position position="197"/>
    </location>
    <ligand>
        <name>phosphate</name>
        <dbReference type="ChEBI" id="CHEBI:43474"/>
    </ligand>
</feature>
<feature type="binding site" evidence="1">
    <location>
        <begin position="220"/>
        <end position="222"/>
    </location>
    <ligand>
        <name>substrate</name>
    </ligand>
</feature>
<feature type="site" description="Important for substrate specificity" evidence="1">
    <location>
        <position position="178"/>
    </location>
</feature>
<feature type="site" description="Important for substrate specificity" evidence="1">
    <location>
        <position position="233"/>
    </location>
</feature>
<sequence>MSEENVLIGVIGGSGLYQLDNLTVVKTVNPETPWGFPSSPITIAALPSGTKVAFLARHGIGHVIPPSSVPSTANIAALKSLGVSAILSFSAVGSLREEISPGSFALPSQIIDRTKGIRDSSFFNGTSIVAHAMFGDPFSNKLIRWLEPRVRKALEKEGKGKLLFTDKTIVCMEGPQFSTRAESVMYRQWGGDLINMSVLPEAKLAREAELSYALIAMATDYDSWRPHSDAVTAHDVVQTLHDNGASAKLVLSTILDDLHTTINTHHRALTNGNSQDLEAIREEEALLQERGSMKFSIMPASPQQKAEDRKKLAFILPEHFKDAA</sequence>
<keyword id="KW-0963">Cytoplasm</keyword>
<keyword id="KW-0328">Glycosyltransferase</keyword>
<keyword id="KW-0539">Nucleus</keyword>
<keyword id="KW-0660">Purine salvage</keyword>
<keyword id="KW-1185">Reference proteome</keyword>
<keyword id="KW-0808">Transferase</keyword>
<dbReference type="EC" id="2.4.2.28" evidence="1"/>
<dbReference type="EMBL" id="AACS02000005">
    <property type="protein sequence ID" value="EAU82357.1"/>
    <property type="molecule type" value="Genomic_DNA"/>
</dbReference>
<dbReference type="RefSeq" id="XP_001839454.1">
    <property type="nucleotide sequence ID" value="XM_001839402.2"/>
</dbReference>
<dbReference type="SMR" id="A8P7Y3"/>
<dbReference type="FunCoup" id="A8P7Y3">
    <property type="interactions" value="318"/>
</dbReference>
<dbReference type="STRING" id="240176.A8P7Y3"/>
<dbReference type="GeneID" id="6016068"/>
<dbReference type="KEGG" id="cci:CC1G_06667"/>
<dbReference type="VEuPathDB" id="FungiDB:CC1G_06667"/>
<dbReference type="eggNOG" id="KOG3985">
    <property type="taxonomic scope" value="Eukaryota"/>
</dbReference>
<dbReference type="HOGENOM" id="CLU_054456_0_1_1"/>
<dbReference type="InParanoid" id="A8P7Y3"/>
<dbReference type="OMA" id="ADPFCPE"/>
<dbReference type="OrthoDB" id="431409at2759"/>
<dbReference type="UniPathway" id="UPA00904">
    <property type="reaction ID" value="UER00873"/>
</dbReference>
<dbReference type="Proteomes" id="UP000001861">
    <property type="component" value="Unassembled WGS sequence"/>
</dbReference>
<dbReference type="GO" id="GO:0005829">
    <property type="term" value="C:cytosol"/>
    <property type="evidence" value="ECO:0007669"/>
    <property type="project" value="TreeGrafter"/>
</dbReference>
<dbReference type="GO" id="GO:0005634">
    <property type="term" value="C:nucleus"/>
    <property type="evidence" value="ECO:0007669"/>
    <property type="project" value="UniProtKB-SubCell"/>
</dbReference>
<dbReference type="GO" id="GO:0017061">
    <property type="term" value="F:S-methyl-5-thioadenosine phosphorylase activity"/>
    <property type="evidence" value="ECO:0007669"/>
    <property type="project" value="UniProtKB-UniRule"/>
</dbReference>
<dbReference type="GO" id="GO:0019509">
    <property type="term" value="P:L-methionine salvage from methylthioadenosine"/>
    <property type="evidence" value="ECO:0007669"/>
    <property type="project" value="UniProtKB-UniRule"/>
</dbReference>
<dbReference type="GO" id="GO:0006166">
    <property type="term" value="P:purine ribonucleoside salvage"/>
    <property type="evidence" value="ECO:0007669"/>
    <property type="project" value="UniProtKB-KW"/>
</dbReference>
<dbReference type="CDD" id="cd09010">
    <property type="entry name" value="MTAP_SsMTAPII_like_MTIP"/>
    <property type="match status" value="1"/>
</dbReference>
<dbReference type="FunFam" id="3.40.50.1580:FF:000008">
    <property type="entry name" value="S-methyl-5'-thioadenosine phosphorylase"/>
    <property type="match status" value="1"/>
</dbReference>
<dbReference type="Gene3D" id="3.40.50.1580">
    <property type="entry name" value="Nucleoside phosphorylase domain"/>
    <property type="match status" value="1"/>
</dbReference>
<dbReference type="HAMAP" id="MF_01963">
    <property type="entry name" value="MTAP"/>
    <property type="match status" value="1"/>
</dbReference>
<dbReference type="InterPro" id="IPR010044">
    <property type="entry name" value="MTAP"/>
</dbReference>
<dbReference type="InterPro" id="IPR000845">
    <property type="entry name" value="Nucleoside_phosphorylase_d"/>
</dbReference>
<dbReference type="InterPro" id="IPR035994">
    <property type="entry name" value="Nucleoside_phosphorylase_sf"/>
</dbReference>
<dbReference type="InterPro" id="IPR018099">
    <property type="entry name" value="Purine_phosphorylase-2_CS"/>
</dbReference>
<dbReference type="PANTHER" id="PTHR42679">
    <property type="entry name" value="S-METHYL-5'-THIOADENOSINE PHOSPHORYLASE"/>
    <property type="match status" value="1"/>
</dbReference>
<dbReference type="PANTHER" id="PTHR42679:SF2">
    <property type="entry name" value="S-METHYL-5'-THIOADENOSINE PHOSPHORYLASE"/>
    <property type="match status" value="1"/>
</dbReference>
<dbReference type="Pfam" id="PF01048">
    <property type="entry name" value="PNP_UDP_1"/>
    <property type="match status" value="1"/>
</dbReference>
<dbReference type="SUPFAM" id="SSF53167">
    <property type="entry name" value="Purine and uridine phosphorylases"/>
    <property type="match status" value="1"/>
</dbReference>
<dbReference type="PROSITE" id="PS01240">
    <property type="entry name" value="PNP_MTAP_2"/>
    <property type="match status" value="1"/>
</dbReference>
<organism>
    <name type="scientific">Coprinopsis cinerea (strain Okayama-7 / 130 / ATCC MYA-4618 / FGSC 9003)</name>
    <name type="common">Inky cap fungus</name>
    <name type="synonym">Hormographiella aspergillata</name>
    <dbReference type="NCBI Taxonomy" id="240176"/>
    <lineage>
        <taxon>Eukaryota</taxon>
        <taxon>Fungi</taxon>
        <taxon>Dikarya</taxon>
        <taxon>Basidiomycota</taxon>
        <taxon>Agaricomycotina</taxon>
        <taxon>Agaricomycetes</taxon>
        <taxon>Agaricomycetidae</taxon>
        <taxon>Agaricales</taxon>
        <taxon>Agaricineae</taxon>
        <taxon>Psathyrellaceae</taxon>
        <taxon>Coprinopsis</taxon>
    </lineage>
</organism>
<protein>
    <recommendedName>
        <fullName evidence="1">S-methyl-5'-thioadenosine phosphorylase</fullName>
        <ecNumber evidence="1">2.4.2.28</ecNumber>
    </recommendedName>
    <alternativeName>
        <fullName evidence="1">5'-methylthioadenosine phosphorylase</fullName>
        <shortName evidence="1">MTA phosphorylase</shortName>
        <shortName evidence="1">MTAP</shortName>
        <shortName evidence="1">MTAPase</shortName>
    </alternativeName>
</protein>
<reference key="1">
    <citation type="journal article" date="2010" name="Proc. Natl. Acad. Sci. U.S.A.">
        <title>Insights into evolution of multicellular fungi from the assembled chromosomes of the mushroom Coprinopsis cinerea (Coprinus cinereus).</title>
        <authorList>
            <person name="Stajich J.E."/>
            <person name="Wilke S.K."/>
            <person name="Ahren D."/>
            <person name="Au C.H."/>
            <person name="Birren B.W."/>
            <person name="Borodovsky M."/>
            <person name="Burns C."/>
            <person name="Canbaeck B."/>
            <person name="Casselton L.A."/>
            <person name="Cheng C.K."/>
            <person name="Deng J."/>
            <person name="Dietrich F.S."/>
            <person name="Fargo D.C."/>
            <person name="Farman M.L."/>
            <person name="Gathman A.C."/>
            <person name="Goldberg J."/>
            <person name="Guigo R."/>
            <person name="Hoegger P.J."/>
            <person name="Hooker J.B."/>
            <person name="Huggins A."/>
            <person name="James T.Y."/>
            <person name="Kamada T."/>
            <person name="Kilaru S."/>
            <person name="Kodira C."/>
            <person name="Kuees U."/>
            <person name="Kupfer D."/>
            <person name="Kwan H.S."/>
            <person name="Lomsadze A."/>
            <person name="Li W."/>
            <person name="Lilly W.W."/>
            <person name="Ma L.-J."/>
            <person name="Mackey A.J."/>
            <person name="Manning G."/>
            <person name="Martin F."/>
            <person name="Muraguchi H."/>
            <person name="Natvig D.O."/>
            <person name="Palmerini H."/>
            <person name="Ramesh M.A."/>
            <person name="Rehmeyer C.J."/>
            <person name="Roe B.A."/>
            <person name="Shenoy N."/>
            <person name="Stanke M."/>
            <person name="Ter-Hovhannisyan V."/>
            <person name="Tunlid A."/>
            <person name="Velagapudi R."/>
            <person name="Vision T.J."/>
            <person name="Zeng Q."/>
            <person name="Zolan M.E."/>
            <person name="Pukkila P.J."/>
        </authorList>
    </citation>
    <scope>NUCLEOTIDE SEQUENCE [LARGE SCALE GENOMIC DNA]</scope>
    <source>
        <strain>Okayama-7 / 130 / ATCC MYA-4618 / FGSC 9003</strain>
    </source>
</reference>
<name>MTAP_COPC7</name>